<feature type="chain" id="PRO_0000126537" description="Small ribosomal subunit protein uS8">
    <location>
        <begin position="1"/>
        <end position="130"/>
    </location>
</feature>
<gene>
    <name type="primary">rps8</name>
    <name type="ordered locus">VNG_1707G</name>
</gene>
<evidence type="ECO:0000250" key="1"/>
<evidence type="ECO:0000305" key="2"/>
<comment type="function">
    <text evidence="1">One of the primary rRNA binding proteins, it binds directly to 16S rRNA central domain where it helps coordinate assembly of the platform of the 30S subunit.</text>
</comment>
<comment type="subunit">
    <text evidence="1">Part of the 30S ribosomal subunit.</text>
</comment>
<comment type="similarity">
    <text evidence="2">Belongs to the universal ribosomal protein uS8 family.</text>
</comment>
<comment type="sequence caution" evidence="2">
    <conflict type="erroneous initiation">
        <sequence resource="EMBL-CDS" id="AAG19951"/>
    </conflict>
    <text>Truncated N-terminus.</text>
</comment>
<organism>
    <name type="scientific">Halobacterium salinarum (strain ATCC 700922 / JCM 11081 / NRC-1)</name>
    <name type="common">Halobacterium halobium</name>
    <dbReference type="NCBI Taxonomy" id="64091"/>
    <lineage>
        <taxon>Archaea</taxon>
        <taxon>Methanobacteriati</taxon>
        <taxon>Methanobacteriota</taxon>
        <taxon>Stenosarchaea group</taxon>
        <taxon>Halobacteria</taxon>
        <taxon>Halobacteriales</taxon>
        <taxon>Halobacteriaceae</taxon>
        <taxon>Halobacterium</taxon>
        <taxon>Halobacterium salinarum NRC-34001</taxon>
    </lineage>
</organism>
<keyword id="KW-1185">Reference proteome</keyword>
<keyword id="KW-0687">Ribonucleoprotein</keyword>
<keyword id="KW-0689">Ribosomal protein</keyword>
<keyword id="KW-0694">RNA-binding</keyword>
<keyword id="KW-0699">rRNA-binding</keyword>
<sequence>MTANDPLSDALSGIDNAESVGHLTHTVAPASNMVGSVLEVFYDRGYIDGFEFVDNGKAGRFEVELKGAINECGPVNPRYSVGADGFEQWEKRYLPARDYGSLVVTTSHGIMSHYEAREAGIGGQVIAYVY</sequence>
<name>RS8_HALSA</name>
<dbReference type="EMBL" id="AE004437">
    <property type="protein sequence ID" value="AAG19951.1"/>
    <property type="status" value="ALT_INIT"/>
    <property type="molecule type" value="Genomic_DNA"/>
</dbReference>
<dbReference type="PIR" id="C84323">
    <property type="entry name" value="C84323"/>
</dbReference>
<dbReference type="RefSeq" id="WP_010903249.1">
    <property type="nucleotide sequence ID" value="NC_002607.1"/>
</dbReference>
<dbReference type="SMR" id="Q9HPB9"/>
<dbReference type="FunCoup" id="Q9HPB9">
    <property type="interactions" value="146"/>
</dbReference>
<dbReference type="STRING" id="64091.VNG_1707G"/>
<dbReference type="PaxDb" id="64091-VNG_1707G"/>
<dbReference type="KEGG" id="hal:VNG_1707G"/>
<dbReference type="PATRIC" id="fig|64091.14.peg.1303"/>
<dbReference type="HOGENOM" id="CLU_098428_1_2_2"/>
<dbReference type="InParanoid" id="Q9HPB9"/>
<dbReference type="OrthoDB" id="5670at2157"/>
<dbReference type="PhylomeDB" id="Q9HPB9"/>
<dbReference type="Proteomes" id="UP000000554">
    <property type="component" value="Chromosome"/>
</dbReference>
<dbReference type="GO" id="GO:0022627">
    <property type="term" value="C:cytosolic small ribosomal subunit"/>
    <property type="evidence" value="ECO:0000318"/>
    <property type="project" value="GO_Central"/>
</dbReference>
<dbReference type="GO" id="GO:0019843">
    <property type="term" value="F:rRNA binding"/>
    <property type="evidence" value="ECO:0007669"/>
    <property type="project" value="UniProtKB-UniRule"/>
</dbReference>
<dbReference type="GO" id="GO:0003735">
    <property type="term" value="F:structural constituent of ribosome"/>
    <property type="evidence" value="ECO:0000318"/>
    <property type="project" value="GO_Central"/>
</dbReference>
<dbReference type="GO" id="GO:0006412">
    <property type="term" value="P:translation"/>
    <property type="evidence" value="ECO:0007669"/>
    <property type="project" value="UniProtKB-UniRule"/>
</dbReference>
<dbReference type="FunFam" id="3.30.1490.10:FF:000002">
    <property type="entry name" value="40S ribosomal protein S15a"/>
    <property type="match status" value="1"/>
</dbReference>
<dbReference type="Gene3D" id="3.30.1370.30">
    <property type="match status" value="1"/>
</dbReference>
<dbReference type="Gene3D" id="3.30.1490.10">
    <property type="match status" value="1"/>
</dbReference>
<dbReference type="HAMAP" id="MF_01302_A">
    <property type="entry name" value="Ribosomal_uS8_A"/>
    <property type="match status" value="1"/>
</dbReference>
<dbReference type="InterPro" id="IPR000630">
    <property type="entry name" value="Ribosomal_uS8"/>
</dbReference>
<dbReference type="InterPro" id="IPR047863">
    <property type="entry name" value="Ribosomal_uS8_CS"/>
</dbReference>
<dbReference type="InterPro" id="IPR035987">
    <property type="entry name" value="Ribosomal_uS8_sf"/>
</dbReference>
<dbReference type="NCBIfam" id="NF003115">
    <property type="entry name" value="PRK04034.1"/>
    <property type="match status" value="1"/>
</dbReference>
<dbReference type="PANTHER" id="PTHR11758">
    <property type="entry name" value="40S RIBOSOMAL PROTEIN S15A"/>
    <property type="match status" value="1"/>
</dbReference>
<dbReference type="Pfam" id="PF00410">
    <property type="entry name" value="Ribosomal_S8"/>
    <property type="match status" value="1"/>
</dbReference>
<dbReference type="SUPFAM" id="SSF56047">
    <property type="entry name" value="Ribosomal protein S8"/>
    <property type="match status" value="1"/>
</dbReference>
<dbReference type="PROSITE" id="PS00053">
    <property type="entry name" value="RIBOSOMAL_S8"/>
    <property type="match status" value="1"/>
</dbReference>
<proteinExistence type="inferred from homology"/>
<accession>Q9HPB9</accession>
<protein>
    <recommendedName>
        <fullName evidence="2">Small ribosomal subunit protein uS8</fullName>
    </recommendedName>
    <alternativeName>
        <fullName>30S ribosomal protein S8</fullName>
    </alternativeName>
</protein>
<reference key="1">
    <citation type="journal article" date="2000" name="Proc. Natl. Acad. Sci. U.S.A.">
        <title>Genome sequence of Halobacterium species NRC-1.</title>
        <authorList>
            <person name="Ng W.V."/>
            <person name="Kennedy S.P."/>
            <person name="Mahairas G.G."/>
            <person name="Berquist B."/>
            <person name="Pan M."/>
            <person name="Shukla H.D."/>
            <person name="Lasky S.R."/>
            <person name="Baliga N.S."/>
            <person name="Thorsson V."/>
            <person name="Sbrogna J."/>
            <person name="Swartzell S."/>
            <person name="Weir D."/>
            <person name="Hall J."/>
            <person name="Dahl T.A."/>
            <person name="Welti R."/>
            <person name="Goo Y.A."/>
            <person name="Leithauser B."/>
            <person name="Keller K."/>
            <person name="Cruz R."/>
            <person name="Danson M.J."/>
            <person name="Hough D.W."/>
            <person name="Maddocks D.G."/>
            <person name="Jablonski P.E."/>
            <person name="Krebs M.P."/>
            <person name="Angevine C.M."/>
            <person name="Dale H."/>
            <person name="Isenbarger T.A."/>
            <person name="Peck R.F."/>
            <person name="Pohlschroder M."/>
            <person name="Spudich J.L."/>
            <person name="Jung K.-H."/>
            <person name="Alam M."/>
            <person name="Freitas T."/>
            <person name="Hou S."/>
            <person name="Daniels C.J."/>
            <person name="Dennis P.P."/>
            <person name="Omer A.D."/>
            <person name="Ebhardt H."/>
            <person name="Lowe T.M."/>
            <person name="Liang P."/>
            <person name="Riley M."/>
            <person name="Hood L."/>
            <person name="DasSarma S."/>
        </authorList>
    </citation>
    <scope>NUCLEOTIDE SEQUENCE [LARGE SCALE GENOMIC DNA]</scope>
    <source>
        <strain>ATCC 700922 / JCM 11081 / NRC-1</strain>
    </source>
</reference>